<organism>
    <name type="scientific">Klebsiella pneumoniae subsp. pneumoniae (strain ATCC 700721 / MGH 78578)</name>
    <dbReference type="NCBI Taxonomy" id="272620"/>
    <lineage>
        <taxon>Bacteria</taxon>
        <taxon>Pseudomonadati</taxon>
        <taxon>Pseudomonadota</taxon>
        <taxon>Gammaproteobacteria</taxon>
        <taxon>Enterobacterales</taxon>
        <taxon>Enterobacteriaceae</taxon>
        <taxon>Klebsiella/Raoultella group</taxon>
        <taxon>Klebsiella</taxon>
        <taxon>Klebsiella pneumoniae complex</taxon>
    </lineage>
</organism>
<accession>A6TD79</accession>
<proteinExistence type="inferred from homology"/>
<dbReference type="EC" id="3.1.-.-" evidence="1"/>
<dbReference type="EMBL" id="CP000647">
    <property type="protein sequence ID" value="ABR78550.1"/>
    <property type="molecule type" value="Genomic_DNA"/>
</dbReference>
<dbReference type="RefSeq" id="WP_004142871.1">
    <property type="nucleotide sequence ID" value="NC_009648.1"/>
</dbReference>
<dbReference type="SMR" id="A6TD79"/>
<dbReference type="STRING" id="272620.KPN_03149"/>
<dbReference type="PaxDb" id="272620-KPN_03149"/>
<dbReference type="EnsemblBacteria" id="ABR78550">
    <property type="protein sequence ID" value="ABR78550"/>
    <property type="gene ID" value="KPN_03149"/>
</dbReference>
<dbReference type="GeneID" id="93271552"/>
<dbReference type="KEGG" id="kpn:KPN_03149"/>
<dbReference type="HOGENOM" id="CLU_004675_1_2_6"/>
<dbReference type="Proteomes" id="UP000000265">
    <property type="component" value="Chromosome"/>
</dbReference>
<dbReference type="GO" id="GO:0008409">
    <property type="term" value="F:5'-3' exonuclease activity"/>
    <property type="evidence" value="ECO:0007669"/>
    <property type="project" value="InterPro"/>
</dbReference>
<dbReference type="GO" id="GO:0017108">
    <property type="term" value="F:5'-flap endonuclease activity"/>
    <property type="evidence" value="ECO:0007669"/>
    <property type="project" value="UniProtKB-UniRule"/>
</dbReference>
<dbReference type="GO" id="GO:0003677">
    <property type="term" value="F:DNA binding"/>
    <property type="evidence" value="ECO:0007669"/>
    <property type="project" value="UniProtKB-UniRule"/>
</dbReference>
<dbReference type="GO" id="GO:0000287">
    <property type="term" value="F:magnesium ion binding"/>
    <property type="evidence" value="ECO:0007669"/>
    <property type="project" value="UniProtKB-UniRule"/>
</dbReference>
<dbReference type="GO" id="GO:0030955">
    <property type="term" value="F:potassium ion binding"/>
    <property type="evidence" value="ECO:0007669"/>
    <property type="project" value="UniProtKB-UniRule"/>
</dbReference>
<dbReference type="GO" id="GO:0033567">
    <property type="term" value="P:DNA replication, Okazaki fragment processing"/>
    <property type="evidence" value="ECO:0007669"/>
    <property type="project" value="UniProtKB-UniRule"/>
</dbReference>
<dbReference type="CDD" id="cd09898">
    <property type="entry name" value="H3TH_53EXO"/>
    <property type="match status" value="1"/>
</dbReference>
<dbReference type="CDD" id="cd09859">
    <property type="entry name" value="PIN_53EXO"/>
    <property type="match status" value="1"/>
</dbReference>
<dbReference type="FunFam" id="1.10.150.20:FF:000003">
    <property type="entry name" value="DNA polymerase I"/>
    <property type="match status" value="1"/>
</dbReference>
<dbReference type="FunFam" id="3.40.50.1010:FF:000011">
    <property type="entry name" value="Flap endonuclease Xni"/>
    <property type="match status" value="1"/>
</dbReference>
<dbReference type="Gene3D" id="1.10.150.20">
    <property type="entry name" value="5' to 3' exonuclease, C-terminal subdomain"/>
    <property type="match status" value="1"/>
</dbReference>
<dbReference type="Gene3D" id="3.40.50.1010">
    <property type="entry name" value="5'-nuclease"/>
    <property type="match status" value="1"/>
</dbReference>
<dbReference type="HAMAP" id="MF_01192">
    <property type="entry name" value="Xni"/>
    <property type="match status" value="1"/>
</dbReference>
<dbReference type="InterPro" id="IPR020046">
    <property type="entry name" value="5-3_exonucl_a-hlix_arch_N"/>
</dbReference>
<dbReference type="InterPro" id="IPR002421">
    <property type="entry name" value="5-3_exonuclease"/>
</dbReference>
<dbReference type="InterPro" id="IPR036279">
    <property type="entry name" value="5-3_exonuclease_C_sf"/>
</dbReference>
<dbReference type="InterPro" id="IPR020045">
    <property type="entry name" value="DNA_polI_H3TH"/>
</dbReference>
<dbReference type="InterPro" id="IPR038969">
    <property type="entry name" value="FEN"/>
</dbReference>
<dbReference type="InterPro" id="IPR008918">
    <property type="entry name" value="HhH2"/>
</dbReference>
<dbReference type="InterPro" id="IPR029060">
    <property type="entry name" value="PIN-like_dom_sf"/>
</dbReference>
<dbReference type="InterPro" id="IPR022895">
    <property type="entry name" value="Xni"/>
</dbReference>
<dbReference type="NCBIfam" id="NF007017">
    <property type="entry name" value="PRK09482.1"/>
    <property type="match status" value="1"/>
</dbReference>
<dbReference type="PANTHER" id="PTHR42646:SF2">
    <property type="entry name" value="5'-3' EXONUCLEASE FAMILY PROTEIN"/>
    <property type="match status" value="1"/>
</dbReference>
<dbReference type="PANTHER" id="PTHR42646">
    <property type="entry name" value="FLAP ENDONUCLEASE XNI"/>
    <property type="match status" value="1"/>
</dbReference>
<dbReference type="Pfam" id="PF01367">
    <property type="entry name" value="5_3_exonuc"/>
    <property type="match status" value="1"/>
</dbReference>
<dbReference type="Pfam" id="PF02739">
    <property type="entry name" value="5_3_exonuc_N"/>
    <property type="match status" value="1"/>
</dbReference>
<dbReference type="SMART" id="SM00475">
    <property type="entry name" value="53EXOc"/>
    <property type="match status" value="1"/>
</dbReference>
<dbReference type="SMART" id="SM00279">
    <property type="entry name" value="HhH2"/>
    <property type="match status" value="1"/>
</dbReference>
<dbReference type="SUPFAM" id="SSF47807">
    <property type="entry name" value="5' to 3' exonuclease, C-terminal subdomain"/>
    <property type="match status" value="1"/>
</dbReference>
<dbReference type="SUPFAM" id="SSF88723">
    <property type="entry name" value="PIN domain-like"/>
    <property type="match status" value="1"/>
</dbReference>
<keyword id="KW-0238">DNA-binding</keyword>
<keyword id="KW-0255">Endonuclease</keyword>
<keyword id="KW-0378">Hydrolase</keyword>
<keyword id="KW-0460">Magnesium</keyword>
<keyword id="KW-0479">Metal-binding</keyword>
<keyword id="KW-0540">Nuclease</keyword>
<keyword id="KW-0630">Potassium</keyword>
<comment type="function">
    <text evidence="1">Has flap endonuclease activity. During DNA replication, flap endonucleases cleave the 5'-overhanging flap structure that is generated by displacement synthesis when DNA polymerase encounters the 5'-end of a downstream Okazaki fragment.</text>
</comment>
<comment type="cofactor">
    <cofactor evidence="1">
        <name>Mg(2+)</name>
        <dbReference type="ChEBI" id="CHEBI:18420"/>
    </cofactor>
    <text evidence="1">Binds 2 Mg(2+) per subunit. Only one magnesium ion has a direct interaction with the protein, the other interactions are indirect.</text>
</comment>
<comment type="cofactor">
    <cofactor evidence="1">
        <name>K(+)</name>
        <dbReference type="ChEBI" id="CHEBI:29103"/>
    </cofactor>
    <text evidence="1">Binds 1 K(+) per subunit. The potassium ion strongly increases the affinity for DNA.</text>
</comment>
<comment type="similarity">
    <text evidence="1">Belongs to the Xni family.</text>
</comment>
<feature type="chain" id="PRO_1000065881" description="Flap endonuclease Xni">
    <location>
        <begin position="1"/>
        <end position="251"/>
    </location>
</feature>
<feature type="domain" description="5'-3' exonuclease" evidence="1">
    <location>
        <begin position="160"/>
        <end position="249"/>
    </location>
</feature>
<feature type="region of interest" description="Interaction with DNA" evidence="1">
    <location>
        <begin position="184"/>
        <end position="189"/>
    </location>
</feature>
<feature type="binding site" evidence="1">
    <location>
        <position position="104"/>
    </location>
    <ligand>
        <name>Mg(2+)</name>
        <dbReference type="ChEBI" id="CHEBI:18420"/>
    </ligand>
</feature>
<feature type="binding site" evidence="1">
    <location>
        <position position="171"/>
    </location>
    <ligand>
        <name>K(+)</name>
        <dbReference type="ChEBI" id="CHEBI:29103"/>
    </ligand>
</feature>
<feature type="binding site" evidence="1">
    <location>
        <position position="172"/>
    </location>
    <ligand>
        <name>K(+)</name>
        <dbReference type="ChEBI" id="CHEBI:29103"/>
    </ligand>
</feature>
<feature type="binding site" evidence="1">
    <location>
        <position position="180"/>
    </location>
    <ligand>
        <name>K(+)</name>
        <dbReference type="ChEBI" id="CHEBI:29103"/>
    </ligand>
</feature>
<feature type="binding site" evidence="1">
    <location>
        <position position="182"/>
    </location>
    <ligand>
        <name>K(+)</name>
        <dbReference type="ChEBI" id="CHEBI:29103"/>
    </ligand>
</feature>
<feature type="binding site" evidence="1">
    <location>
        <position position="185"/>
    </location>
    <ligand>
        <name>K(+)</name>
        <dbReference type="ChEBI" id="CHEBI:29103"/>
    </ligand>
</feature>
<evidence type="ECO:0000255" key="1">
    <source>
        <dbReference type="HAMAP-Rule" id="MF_01192"/>
    </source>
</evidence>
<gene>
    <name evidence="1" type="primary">xni</name>
    <name evidence="1" type="synonym">ygdG</name>
    <name type="ordered locus">KPN78578_30890</name>
    <name type="ORF">KPN_03149</name>
</gene>
<protein>
    <recommendedName>
        <fullName evidence="1">Flap endonuclease Xni</fullName>
        <shortName evidence="1">FEN</shortName>
        <ecNumber evidence="1">3.1.-.-</ecNumber>
    </recommendedName>
</protein>
<reference key="1">
    <citation type="submission" date="2006-09" db="EMBL/GenBank/DDBJ databases">
        <authorList>
            <consortium name="The Klebsiella pneumonia Genome Sequencing Project"/>
            <person name="McClelland M."/>
            <person name="Sanderson E.K."/>
            <person name="Spieth J."/>
            <person name="Clifton W.S."/>
            <person name="Latreille P."/>
            <person name="Sabo A."/>
            <person name="Pepin K."/>
            <person name="Bhonagiri V."/>
            <person name="Porwollik S."/>
            <person name="Ali J."/>
            <person name="Wilson R.K."/>
        </authorList>
    </citation>
    <scope>NUCLEOTIDE SEQUENCE [LARGE SCALE GENOMIC DNA]</scope>
    <source>
        <strain>ATCC 700721 / MGH 78578</strain>
    </source>
</reference>
<name>XNI_KLEP7</name>
<sequence>MAVHLLIVDALNLIRRIHAVQGSPCVDTCLHALEQLIVHSQPTHAVAVFDDEDRAHGWRHQRLPEYKAGRAPMPETLVAEMPALRAAFEQRGIRCWASPGSEADDLAATLAVKVAQAGHQATIVSTDKGYCQLLSPTIRIRDYFQKRWLDAPFIASEFGVTPEQLADYWGLAGISSSKVPGVAGIGPKSAAQLLNEFQDLEGLYARLAEVPEKWRKKLAAHQEMAFTCREVARLQTDLQLDGNLQQLRLTR</sequence>